<gene>
    <name evidence="1" type="primary">rsmA</name>
    <name evidence="1" type="synonym">ksgA</name>
    <name type="ordered locus">Bcenmc03_2735</name>
</gene>
<evidence type="ECO:0000255" key="1">
    <source>
        <dbReference type="HAMAP-Rule" id="MF_00607"/>
    </source>
</evidence>
<protein>
    <recommendedName>
        <fullName evidence="1">Ribosomal RNA small subunit methyltransferase A</fullName>
        <ecNumber evidence="1">2.1.1.182</ecNumber>
    </recommendedName>
    <alternativeName>
        <fullName evidence="1">16S rRNA (adenine(1518)-N(6)/adenine(1519)-N(6))-dimethyltransferase</fullName>
    </alternativeName>
    <alternativeName>
        <fullName evidence="1">16S rRNA dimethyladenosine transferase</fullName>
    </alternativeName>
    <alternativeName>
        <fullName evidence="1">16S rRNA dimethylase</fullName>
    </alternativeName>
    <alternativeName>
        <fullName evidence="1">S-adenosylmethionine-6-N', N'-adenosyl(rRNA) dimethyltransferase</fullName>
    </alternativeName>
</protein>
<comment type="function">
    <text evidence="1">Specifically dimethylates two adjacent adenosines (A1518 and A1519) in the loop of a conserved hairpin near the 3'-end of 16S rRNA in the 30S particle. May play a critical role in biogenesis of 30S subunits.</text>
</comment>
<comment type="catalytic activity">
    <reaction evidence="1">
        <text>adenosine(1518)/adenosine(1519) in 16S rRNA + 4 S-adenosyl-L-methionine = N(6)-dimethyladenosine(1518)/N(6)-dimethyladenosine(1519) in 16S rRNA + 4 S-adenosyl-L-homocysteine + 4 H(+)</text>
        <dbReference type="Rhea" id="RHEA:19609"/>
        <dbReference type="Rhea" id="RHEA-COMP:10232"/>
        <dbReference type="Rhea" id="RHEA-COMP:10233"/>
        <dbReference type="ChEBI" id="CHEBI:15378"/>
        <dbReference type="ChEBI" id="CHEBI:57856"/>
        <dbReference type="ChEBI" id="CHEBI:59789"/>
        <dbReference type="ChEBI" id="CHEBI:74411"/>
        <dbReference type="ChEBI" id="CHEBI:74493"/>
        <dbReference type="EC" id="2.1.1.182"/>
    </reaction>
</comment>
<comment type="subcellular location">
    <subcellularLocation>
        <location evidence="1">Cytoplasm</location>
    </subcellularLocation>
</comment>
<comment type="similarity">
    <text evidence="1">Belongs to the class I-like SAM-binding methyltransferase superfamily. rRNA adenine N(6)-methyltransferase family. RsmA subfamily.</text>
</comment>
<accession>B1JY71</accession>
<keyword id="KW-0963">Cytoplasm</keyword>
<keyword id="KW-0489">Methyltransferase</keyword>
<keyword id="KW-0694">RNA-binding</keyword>
<keyword id="KW-0698">rRNA processing</keyword>
<keyword id="KW-0949">S-adenosyl-L-methionine</keyword>
<keyword id="KW-0808">Transferase</keyword>
<organism>
    <name type="scientific">Burkholderia orbicola (strain MC0-3)</name>
    <dbReference type="NCBI Taxonomy" id="406425"/>
    <lineage>
        <taxon>Bacteria</taxon>
        <taxon>Pseudomonadati</taxon>
        <taxon>Pseudomonadota</taxon>
        <taxon>Betaproteobacteria</taxon>
        <taxon>Burkholderiales</taxon>
        <taxon>Burkholderiaceae</taxon>
        <taxon>Burkholderia</taxon>
        <taxon>Burkholderia cepacia complex</taxon>
        <taxon>Burkholderia orbicola</taxon>
    </lineage>
</organism>
<feature type="chain" id="PRO_1000130251" description="Ribosomal RNA small subunit methyltransferase A">
    <location>
        <begin position="1"/>
        <end position="275"/>
    </location>
</feature>
<feature type="binding site" evidence="1">
    <location>
        <position position="19"/>
    </location>
    <ligand>
        <name>S-adenosyl-L-methionine</name>
        <dbReference type="ChEBI" id="CHEBI:59789"/>
    </ligand>
</feature>
<feature type="binding site" evidence="1">
    <location>
        <position position="21"/>
    </location>
    <ligand>
        <name>S-adenosyl-L-methionine</name>
        <dbReference type="ChEBI" id="CHEBI:59789"/>
    </ligand>
</feature>
<feature type="binding site" evidence="1">
    <location>
        <position position="46"/>
    </location>
    <ligand>
        <name>S-adenosyl-L-methionine</name>
        <dbReference type="ChEBI" id="CHEBI:59789"/>
    </ligand>
</feature>
<feature type="binding site" evidence="1">
    <location>
        <position position="71"/>
    </location>
    <ligand>
        <name>S-adenosyl-L-methionine</name>
        <dbReference type="ChEBI" id="CHEBI:59789"/>
    </ligand>
</feature>
<feature type="binding site" evidence="1">
    <location>
        <position position="94"/>
    </location>
    <ligand>
        <name>S-adenosyl-L-methionine</name>
        <dbReference type="ChEBI" id="CHEBI:59789"/>
    </ligand>
</feature>
<feature type="binding site" evidence="1">
    <location>
        <position position="117"/>
    </location>
    <ligand>
        <name>S-adenosyl-L-methionine</name>
        <dbReference type="ChEBI" id="CHEBI:59789"/>
    </ligand>
</feature>
<proteinExistence type="inferred from homology"/>
<dbReference type="EC" id="2.1.1.182" evidence="1"/>
<dbReference type="EMBL" id="CP000958">
    <property type="protein sequence ID" value="ACA91895.1"/>
    <property type="molecule type" value="Genomic_DNA"/>
</dbReference>
<dbReference type="RefSeq" id="WP_011546170.1">
    <property type="nucleotide sequence ID" value="NC_010508.1"/>
</dbReference>
<dbReference type="SMR" id="B1JY71"/>
<dbReference type="GeneID" id="83049520"/>
<dbReference type="KEGG" id="bcm:Bcenmc03_2735"/>
<dbReference type="HOGENOM" id="CLU_041220_0_1_4"/>
<dbReference type="Proteomes" id="UP000002169">
    <property type="component" value="Chromosome 1"/>
</dbReference>
<dbReference type="GO" id="GO:0005829">
    <property type="term" value="C:cytosol"/>
    <property type="evidence" value="ECO:0007669"/>
    <property type="project" value="TreeGrafter"/>
</dbReference>
<dbReference type="GO" id="GO:0052908">
    <property type="term" value="F:16S rRNA (adenine(1518)-N(6)/adenine(1519)-N(6))-dimethyltransferase activity"/>
    <property type="evidence" value="ECO:0007669"/>
    <property type="project" value="UniProtKB-EC"/>
</dbReference>
<dbReference type="GO" id="GO:0003723">
    <property type="term" value="F:RNA binding"/>
    <property type="evidence" value="ECO:0007669"/>
    <property type="project" value="UniProtKB-KW"/>
</dbReference>
<dbReference type="FunFam" id="1.10.8.100:FF:000001">
    <property type="entry name" value="Ribosomal RNA small subunit methyltransferase A"/>
    <property type="match status" value="1"/>
</dbReference>
<dbReference type="Gene3D" id="1.10.8.100">
    <property type="entry name" value="Ribosomal RNA adenine dimethylase-like, domain 2"/>
    <property type="match status" value="1"/>
</dbReference>
<dbReference type="Gene3D" id="3.40.50.150">
    <property type="entry name" value="Vaccinia Virus protein VP39"/>
    <property type="match status" value="1"/>
</dbReference>
<dbReference type="HAMAP" id="MF_00607">
    <property type="entry name" value="16SrRNA_methyltr_A"/>
    <property type="match status" value="1"/>
</dbReference>
<dbReference type="InterPro" id="IPR001737">
    <property type="entry name" value="KsgA/Erm"/>
</dbReference>
<dbReference type="InterPro" id="IPR023165">
    <property type="entry name" value="rRNA_Ade_diMease-like_C"/>
</dbReference>
<dbReference type="InterPro" id="IPR020598">
    <property type="entry name" value="rRNA_Ade_methylase_Trfase_N"/>
</dbReference>
<dbReference type="InterPro" id="IPR011530">
    <property type="entry name" value="rRNA_adenine_dimethylase"/>
</dbReference>
<dbReference type="InterPro" id="IPR029063">
    <property type="entry name" value="SAM-dependent_MTases_sf"/>
</dbReference>
<dbReference type="NCBIfam" id="TIGR00755">
    <property type="entry name" value="ksgA"/>
    <property type="match status" value="1"/>
</dbReference>
<dbReference type="PANTHER" id="PTHR11727">
    <property type="entry name" value="DIMETHYLADENOSINE TRANSFERASE"/>
    <property type="match status" value="1"/>
</dbReference>
<dbReference type="PANTHER" id="PTHR11727:SF7">
    <property type="entry name" value="DIMETHYLADENOSINE TRANSFERASE-RELATED"/>
    <property type="match status" value="1"/>
</dbReference>
<dbReference type="Pfam" id="PF00398">
    <property type="entry name" value="RrnaAD"/>
    <property type="match status" value="1"/>
</dbReference>
<dbReference type="SMART" id="SM00650">
    <property type="entry name" value="rADc"/>
    <property type="match status" value="1"/>
</dbReference>
<dbReference type="SUPFAM" id="SSF53335">
    <property type="entry name" value="S-adenosyl-L-methionine-dependent methyltransferases"/>
    <property type="match status" value="1"/>
</dbReference>
<dbReference type="PROSITE" id="PS51689">
    <property type="entry name" value="SAM_RNA_A_N6_MT"/>
    <property type="match status" value="1"/>
</dbReference>
<reference key="1">
    <citation type="submission" date="2008-02" db="EMBL/GenBank/DDBJ databases">
        <title>Complete sequence of chromosome 1 of Burkholderia cenocepacia MC0-3.</title>
        <authorList>
            <person name="Copeland A."/>
            <person name="Lucas S."/>
            <person name="Lapidus A."/>
            <person name="Barry K."/>
            <person name="Bruce D."/>
            <person name="Goodwin L."/>
            <person name="Glavina del Rio T."/>
            <person name="Dalin E."/>
            <person name="Tice H."/>
            <person name="Pitluck S."/>
            <person name="Chain P."/>
            <person name="Malfatti S."/>
            <person name="Shin M."/>
            <person name="Vergez L."/>
            <person name="Schmutz J."/>
            <person name="Larimer F."/>
            <person name="Land M."/>
            <person name="Hauser L."/>
            <person name="Kyrpides N."/>
            <person name="Mikhailova N."/>
            <person name="Tiedje J."/>
            <person name="Richardson P."/>
        </authorList>
    </citation>
    <scope>NUCLEOTIDE SEQUENCE [LARGE SCALE GENOMIC DNA]</scope>
    <source>
        <strain>MC0-3</strain>
    </source>
</reference>
<sequence length="275" mass="30437">MSNSRQHQGHFARKRFGQNFLVDHGVIDSIVATIGPARGQRMVEIGPGLGALTGPLIERLATPESPLHAVELDRDLIGRLQQRFGALLELHAGDALAFDFRSLAAPGDKPSLRIVGNLPYNISSPLLFHLMTFADAVIDQHFMLQNEVVERMVAEPGTKAFSRLSVMLQYRYVMEKMLDVPPESFQPPPKVDSAIVRMIPYEPHELPDVDPVLLGEIVTAAFSQRRKMLRNTLGDYRETIDFDALGFDLARRAEDVSVAEYVGVAQALAALRKAG</sequence>
<name>RSMA_BURO0</name>